<proteinExistence type="inferred from homology"/>
<dbReference type="EMBL" id="CP001601">
    <property type="protein sequence ID" value="ACP32028.1"/>
    <property type="molecule type" value="Genomic_DNA"/>
</dbReference>
<dbReference type="RefSeq" id="WP_010189572.1">
    <property type="nucleotide sequence ID" value="NZ_ACLH01000063.1"/>
</dbReference>
<dbReference type="SMR" id="C3PL24"/>
<dbReference type="STRING" id="548476.cauri_0429"/>
<dbReference type="GeneID" id="31923046"/>
<dbReference type="KEGG" id="car:cauri_0429"/>
<dbReference type="eggNOG" id="COG0097">
    <property type="taxonomic scope" value="Bacteria"/>
</dbReference>
<dbReference type="HOGENOM" id="CLU_065464_1_2_11"/>
<dbReference type="OrthoDB" id="9805007at2"/>
<dbReference type="Proteomes" id="UP000002077">
    <property type="component" value="Chromosome"/>
</dbReference>
<dbReference type="GO" id="GO:0022625">
    <property type="term" value="C:cytosolic large ribosomal subunit"/>
    <property type="evidence" value="ECO:0007669"/>
    <property type="project" value="TreeGrafter"/>
</dbReference>
<dbReference type="GO" id="GO:0019843">
    <property type="term" value="F:rRNA binding"/>
    <property type="evidence" value="ECO:0007669"/>
    <property type="project" value="UniProtKB-UniRule"/>
</dbReference>
<dbReference type="GO" id="GO:0003735">
    <property type="term" value="F:structural constituent of ribosome"/>
    <property type="evidence" value="ECO:0007669"/>
    <property type="project" value="InterPro"/>
</dbReference>
<dbReference type="GO" id="GO:0002181">
    <property type="term" value="P:cytoplasmic translation"/>
    <property type="evidence" value="ECO:0007669"/>
    <property type="project" value="TreeGrafter"/>
</dbReference>
<dbReference type="FunFam" id="3.90.930.12:FF:000001">
    <property type="entry name" value="50S ribosomal protein L6"/>
    <property type="match status" value="1"/>
</dbReference>
<dbReference type="FunFam" id="3.90.930.12:FF:000002">
    <property type="entry name" value="50S ribosomal protein L6"/>
    <property type="match status" value="1"/>
</dbReference>
<dbReference type="Gene3D" id="3.90.930.12">
    <property type="entry name" value="Ribosomal protein L6, alpha-beta domain"/>
    <property type="match status" value="2"/>
</dbReference>
<dbReference type="HAMAP" id="MF_01365_B">
    <property type="entry name" value="Ribosomal_uL6_B"/>
    <property type="match status" value="1"/>
</dbReference>
<dbReference type="InterPro" id="IPR000702">
    <property type="entry name" value="Ribosomal_uL6-like"/>
</dbReference>
<dbReference type="InterPro" id="IPR036789">
    <property type="entry name" value="Ribosomal_uL6-like_a/b-dom_sf"/>
</dbReference>
<dbReference type="InterPro" id="IPR020040">
    <property type="entry name" value="Ribosomal_uL6_a/b-dom"/>
</dbReference>
<dbReference type="InterPro" id="IPR019906">
    <property type="entry name" value="Ribosomal_uL6_bac-type"/>
</dbReference>
<dbReference type="NCBIfam" id="TIGR03654">
    <property type="entry name" value="L6_bact"/>
    <property type="match status" value="1"/>
</dbReference>
<dbReference type="PANTHER" id="PTHR11655">
    <property type="entry name" value="60S/50S RIBOSOMAL PROTEIN L6/L9"/>
    <property type="match status" value="1"/>
</dbReference>
<dbReference type="PANTHER" id="PTHR11655:SF14">
    <property type="entry name" value="LARGE RIBOSOMAL SUBUNIT PROTEIN UL6M"/>
    <property type="match status" value="1"/>
</dbReference>
<dbReference type="Pfam" id="PF00347">
    <property type="entry name" value="Ribosomal_L6"/>
    <property type="match status" value="2"/>
</dbReference>
<dbReference type="PIRSF" id="PIRSF002162">
    <property type="entry name" value="Ribosomal_L6"/>
    <property type="match status" value="1"/>
</dbReference>
<dbReference type="PRINTS" id="PR00059">
    <property type="entry name" value="RIBOSOMALL6"/>
</dbReference>
<dbReference type="SUPFAM" id="SSF56053">
    <property type="entry name" value="Ribosomal protein L6"/>
    <property type="match status" value="2"/>
</dbReference>
<accession>C3PL24</accession>
<reference key="1">
    <citation type="journal article" date="2010" name="BMC Genomics">
        <title>Complete genome sequence and lifestyle of black-pigmented Corynebacterium aurimucosum ATCC 700975 (formerly C. nigricans CN-1) isolated from a vaginal swab of a woman with spontaneous abortion.</title>
        <authorList>
            <person name="Trost E."/>
            <person name="Gotker S."/>
            <person name="Schneider J."/>
            <person name="Schneiker-Bekel S."/>
            <person name="Szczepanowski R."/>
            <person name="Tilker A."/>
            <person name="Viehoever P."/>
            <person name="Arnold W."/>
            <person name="Bekel T."/>
            <person name="Blom J."/>
            <person name="Gartemann K.H."/>
            <person name="Linke B."/>
            <person name="Goesmann A."/>
            <person name="Puhler A."/>
            <person name="Shukla S.K."/>
            <person name="Tauch A."/>
        </authorList>
    </citation>
    <scope>NUCLEOTIDE SEQUENCE [LARGE SCALE GENOMIC DNA]</scope>
    <source>
        <strain>ATCC 700975 / DSM 44827 / CIP 107346 / CN-1</strain>
    </source>
</reference>
<organism>
    <name type="scientific">Corynebacterium aurimucosum (strain ATCC 700975 / DSM 44827 / CIP 107346 / CN-1)</name>
    <name type="common">Corynebacterium nigricans</name>
    <dbReference type="NCBI Taxonomy" id="548476"/>
    <lineage>
        <taxon>Bacteria</taxon>
        <taxon>Bacillati</taxon>
        <taxon>Actinomycetota</taxon>
        <taxon>Actinomycetes</taxon>
        <taxon>Mycobacteriales</taxon>
        <taxon>Corynebacteriaceae</taxon>
        <taxon>Corynebacterium</taxon>
    </lineage>
</organism>
<comment type="function">
    <text evidence="1">This protein binds to the 23S rRNA, and is important in its secondary structure. It is located near the subunit interface in the base of the L7/L12 stalk, and near the tRNA binding site of the peptidyltransferase center.</text>
</comment>
<comment type="subunit">
    <text evidence="1">Part of the 50S ribosomal subunit.</text>
</comment>
<comment type="similarity">
    <text evidence="1">Belongs to the universal ribosomal protein uL6 family.</text>
</comment>
<gene>
    <name evidence="1" type="primary">rplF</name>
    <name type="ordered locus">cauri_0429</name>
</gene>
<feature type="chain" id="PRO_1000166802" description="Large ribosomal subunit protein uL6">
    <location>
        <begin position="1"/>
        <end position="178"/>
    </location>
</feature>
<protein>
    <recommendedName>
        <fullName evidence="1">Large ribosomal subunit protein uL6</fullName>
    </recommendedName>
    <alternativeName>
        <fullName evidence="2">50S ribosomal protein L6</fullName>
    </alternativeName>
</protein>
<sequence length="178" mass="19298">MSRIGLAPIAVPKGVDITINGQVVNVKGAKGTLEVELPEPITAAVEDDEIKVSRPDDDRKNRALHGLARSLVNNAVVGVTEGYTKKMEIFGVGYRVQQKGKDLEFSLGYSHPILIEAPEGITFAVDGATKLSVSGIDKQLVGQVAAYIRRLRKDDPYKGKGIRYDGEQVRRKVGKTGK</sequence>
<evidence type="ECO:0000255" key="1">
    <source>
        <dbReference type="HAMAP-Rule" id="MF_01365"/>
    </source>
</evidence>
<evidence type="ECO:0000305" key="2"/>
<keyword id="KW-1185">Reference proteome</keyword>
<keyword id="KW-0687">Ribonucleoprotein</keyword>
<keyword id="KW-0689">Ribosomal protein</keyword>
<keyword id="KW-0694">RNA-binding</keyword>
<keyword id="KW-0699">rRNA-binding</keyword>
<name>RL6_CORA7</name>